<reference key="1">
    <citation type="journal article" date="2010" name="Genome Biol. Evol.">
        <title>Continuing evolution of Burkholderia mallei through genome reduction and large-scale rearrangements.</title>
        <authorList>
            <person name="Losada L."/>
            <person name="Ronning C.M."/>
            <person name="DeShazer D."/>
            <person name="Woods D."/>
            <person name="Fedorova N."/>
            <person name="Kim H.S."/>
            <person name="Shabalina S.A."/>
            <person name="Pearson T.R."/>
            <person name="Brinkac L."/>
            <person name="Tan P."/>
            <person name="Nandi T."/>
            <person name="Crabtree J."/>
            <person name="Badger J."/>
            <person name="Beckstrom-Sternberg S."/>
            <person name="Saqib M."/>
            <person name="Schutzer S.E."/>
            <person name="Keim P."/>
            <person name="Nierman W.C."/>
        </authorList>
    </citation>
    <scope>NUCLEOTIDE SEQUENCE [LARGE SCALE GENOMIC DNA]</scope>
    <source>
        <strain>SAVP1</strain>
    </source>
</reference>
<feature type="chain" id="PRO_1000120238" description="GMP synthase [glutamine-hydrolyzing]">
    <location>
        <begin position="1"/>
        <end position="539"/>
    </location>
</feature>
<feature type="domain" description="Glutamine amidotransferase type-1" evidence="1">
    <location>
        <begin position="4"/>
        <end position="202"/>
    </location>
</feature>
<feature type="domain" description="GMPS ATP-PPase" evidence="1">
    <location>
        <begin position="203"/>
        <end position="395"/>
    </location>
</feature>
<feature type="active site" description="Nucleophile" evidence="1">
    <location>
        <position position="81"/>
    </location>
</feature>
<feature type="active site" evidence="1">
    <location>
        <position position="176"/>
    </location>
</feature>
<feature type="active site" evidence="1">
    <location>
        <position position="178"/>
    </location>
</feature>
<feature type="binding site" evidence="1">
    <location>
        <begin position="230"/>
        <end position="236"/>
    </location>
    <ligand>
        <name>ATP</name>
        <dbReference type="ChEBI" id="CHEBI:30616"/>
    </ligand>
</feature>
<proteinExistence type="inferred from homology"/>
<sequence>MHDKILILDFGSQVTQLIARRVREAHVYCEIHPNDVSDDFVREFAPKGVILSGSHASTYEDHQLRAPQAVWDLGVPVLGICYGMQTMAVQLGGKVEWSDHREFGYAEVRAHGRTRLLDGIQDFATPEGHGMLKVWMSHGDKVGEMPPGFALMASTPSCPIAGMADEARGYYAVQFHPEVTHTVQGRKLLERFVLDIAGAKPDWIMRDHIEEAVARIREQVGDEEVILGLSGGVDSSVAAALIHRAIGDQLTCVFVDHGLLRLNEGKMVLDMFEGRLHAKVVHVDASEQFLGHLAGVADPEHKRKIIGREFVEVFQAEAKKLTNAKWLAQGTIYPDVIESGGAKTKKATTIKSHHNVGGLPETLGLKLLEPLRDLFKDEVRELGVALGLPAEMVYRHPFPGPGLGVRILGEVKRDYAELLRRADAIFIEELRGTLATEQDAAAGLCEPSQVGKSWYDLTSQAFAVFLPVKSVGVMGDGRTYDYVAALRAVQTTDFMTAHWAHLPYALLGRASNRIINEVRGINRVVYDVSGKPPATIEWE</sequence>
<gene>
    <name evidence="1" type="primary">guaA</name>
    <name type="ordered locus">BMASAVP1_A2021</name>
</gene>
<dbReference type="EC" id="6.3.5.2" evidence="1"/>
<dbReference type="EMBL" id="CP000526">
    <property type="protein sequence ID" value="ABM52755.1"/>
    <property type="molecule type" value="Genomic_DNA"/>
</dbReference>
<dbReference type="RefSeq" id="WP_004193192.1">
    <property type="nucleotide sequence ID" value="NC_008785.1"/>
</dbReference>
<dbReference type="SMR" id="A1V534"/>
<dbReference type="GeneID" id="93060667"/>
<dbReference type="KEGG" id="bmv:BMASAVP1_A2021"/>
<dbReference type="HOGENOM" id="CLU_014340_0_5_4"/>
<dbReference type="UniPathway" id="UPA00189">
    <property type="reaction ID" value="UER00296"/>
</dbReference>
<dbReference type="GO" id="GO:0005829">
    <property type="term" value="C:cytosol"/>
    <property type="evidence" value="ECO:0007669"/>
    <property type="project" value="TreeGrafter"/>
</dbReference>
<dbReference type="GO" id="GO:0005524">
    <property type="term" value="F:ATP binding"/>
    <property type="evidence" value="ECO:0007669"/>
    <property type="project" value="UniProtKB-UniRule"/>
</dbReference>
<dbReference type="GO" id="GO:0003921">
    <property type="term" value="F:GMP synthase activity"/>
    <property type="evidence" value="ECO:0007669"/>
    <property type="project" value="InterPro"/>
</dbReference>
<dbReference type="CDD" id="cd01742">
    <property type="entry name" value="GATase1_GMP_Synthase"/>
    <property type="match status" value="1"/>
</dbReference>
<dbReference type="CDD" id="cd01997">
    <property type="entry name" value="GMP_synthase_C"/>
    <property type="match status" value="1"/>
</dbReference>
<dbReference type="FunFam" id="3.30.300.10:FF:000002">
    <property type="entry name" value="GMP synthase [glutamine-hydrolyzing]"/>
    <property type="match status" value="1"/>
</dbReference>
<dbReference type="FunFam" id="3.40.50.620:FF:000001">
    <property type="entry name" value="GMP synthase [glutamine-hydrolyzing]"/>
    <property type="match status" value="1"/>
</dbReference>
<dbReference type="FunFam" id="3.40.50.880:FF:000001">
    <property type="entry name" value="GMP synthase [glutamine-hydrolyzing]"/>
    <property type="match status" value="1"/>
</dbReference>
<dbReference type="Gene3D" id="3.30.300.10">
    <property type="match status" value="1"/>
</dbReference>
<dbReference type="Gene3D" id="3.40.50.880">
    <property type="match status" value="1"/>
</dbReference>
<dbReference type="Gene3D" id="3.40.50.620">
    <property type="entry name" value="HUPs"/>
    <property type="match status" value="1"/>
</dbReference>
<dbReference type="HAMAP" id="MF_00344">
    <property type="entry name" value="GMP_synthase"/>
    <property type="match status" value="1"/>
</dbReference>
<dbReference type="InterPro" id="IPR029062">
    <property type="entry name" value="Class_I_gatase-like"/>
</dbReference>
<dbReference type="InterPro" id="IPR017926">
    <property type="entry name" value="GATASE"/>
</dbReference>
<dbReference type="InterPro" id="IPR001674">
    <property type="entry name" value="GMP_synth_C"/>
</dbReference>
<dbReference type="InterPro" id="IPR004739">
    <property type="entry name" value="GMP_synth_GATase"/>
</dbReference>
<dbReference type="InterPro" id="IPR022955">
    <property type="entry name" value="GMP_synthase"/>
</dbReference>
<dbReference type="InterPro" id="IPR025777">
    <property type="entry name" value="GMPS_ATP_PPase_dom"/>
</dbReference>
<dbReference type="InterPro" id="IPR022310">
    <property type="entry name" value="NAD/GMP_synthase"/>
</dbReference>
<dbReference type="InterPro" id="IPR014729">
    <property type="entry name" value="Rossmann-like_a/b/a_fold"/>
</dbReference>
<dbReference type="NCBIfam" id="TIGR00884">
    <property type="entry name" value="guaA_Cterm"/>
    <property type="match status" value="1"/>
</dbReference>
<dbReference type="NCBIfam" id="TIGR00888">
    <property type="entry name" value="guaA_Nterm"/>
    <property type="match status" value="1"/>
</dbReference>
<dbReference type="NCBIfam" id="NF000848">
    <property type="entry name" value="PRK00074.1"/>
    <property type="match status" value="1"/>
</dbReference>
<dbReference type="PANTHER" id="PTHR11922:SF2">
    <property type="entry name" value="GMP SYNTHASE [GLUTAMINE-HYDROLYZING]"/>
    <property type="match status" value="1"/>
</dbReference>
<dbReference type="PANTHER" id="PTHR11922">
    <property type="entry name" value="GMP SYNTHASE-RELATED"/>
    <property type="match status" value="1"/>
</dbReference>
<dbReference type="Pfam" id="PF00117">
    <property type="entry name" value="GATase"/>
    <property type="match status" value="1"/>
</dbReference>
<dbReference type="Pfam" id="PF00958">
    <property type="entry name" value="GMP_synt_C"/>
    <property type="match status" value="1"/>
</dbReference>
<dbReference type="Pfam" id="PF02540">
    <property type="entry name" value="NAD_synthase"/>
    <property type="match status" value="1"/>
</dbReference>
<dbReference type="SUPFAM" id="SSF52402">
    <property type="entry name" value="Adenine nucleotide alpha hydrolases-like"/>
    <property type="match status" value="1"/>
</dbReference>
<dbReference type="SUPFAM" id="SSF52317">
    <property type="entry name" value="Class I glutamine amidotransferase-like"/>
    <property type="match status" value="1"/>
</dbReference>
<dbReference type="SUPFAM" id="SSF54810">
    <property type="entry name" value="GMP synthetase C-terminal dimerisation domain"/>
    <property type="match status" value="1"/>
</dbReference>
<dbReference type="PROSITE" id="PS51273">
    <property type="entry name" value="GATASE_TYPE_1"/>
    <property type="match status" value="1"/>
</dbReference>
<dbReference type="PROSITE" id="PS51553">
    <property type="entry name" value="GMPS_ATP_PPASE"/>
    <property type="match status" value="1"/>
</dbReference>
<protein>
    <recommendedName>
        <fullName evidence="1">GMP synthase [glutamine-hydrolyzing]</fullName>
        <ecNumber evidence="1">6.3.5.2</ecNumber>
    </recommendedName>
    <alternativeName>
        <fullName evidence="1">GMP synthetase</fullName>
    </alternativeName>
    <alternativeName>
        <fullName evidence="1">Glutamine amidotransferase</fullName>
    </alternativeName>
</protein>
<organism>
    <name type="scientific">Burkholderia mallei (strain SAVP1)</name>
    <dbReference type="NCBI Taxonomy" id="320388"/>
    <lineage>
        <taxon>Bacteria</taxon>
        <taxon>Pseudomonadati</taxon>
        <taxon>Pseudomonadota</taxon>
        <taxon>Betaproteobacteria</taxon>
        <taxon>Burkholderiales</taxon>
        <taxon>Burkholderiaceae</taxon>
        <taxon>Burkholderia</taxon>
        <taxon>pseudomallei group</taxon>
    </lineage>
</organism>
<evidence type="ECO:0000255" key="1">
    <source>
        <dbReference type="HAMAP-Rule" id="MF_00344"/>
    </source>
</evidence>
<keyword id="KW-0067">ATP-binding</keyword>
<keyword id="KW-0315">Glutamine amidotransferase</keyword>
<keyword id="KW-0332">GMP biosynthesis</keyword>
<keyword id="KW-0436">Ligase</keyword>
<keyword id="KW-0547">Nucleotide-binding</keyword>
<keyword id="KW-0658">Purine biosynthesis</keyword>
<name>GUAA_BURMS</name>
<comment type="function">
    <text evidence="1">Catalyzes the synthesis of GMP from XMP.</text>
</comment>
<comment type="catalytic activity">
    <reaction evidence="1">
        <text>XMP + L-glutamine + ATP + H2O = GMP + L-glutamate + AMP + diphosphate + 2 H(+)</text>
        <dbReference type="Rhea" id="RHEA:11680"/>
        <dbReference type="ChEBI" id="CHEBI:15377"/>
        <dbReference type="ChEBI" id="CHEBI:15378"/>
        <dbReference type="ChEBI" id="CHEBI:29985"/>
        <dbReference type="ChEBI" id="CHEBI:30616"/>
        <dbReference type="ChEBI" id="CHEBI:33019"/>
        <dbReference type="ChEBI" id="CHEBI:57464"/>
        <dbReference type="ChEBI" id="CHEBI:58115"/>
        <dbReference type="ChEBI" id="CHEBI:58359"/>
        <dbReference type="ChEBI" id="CHEBI:456215"/>
        <dbReference type="EC" id="6.3.5.2"/>
    </reaction>
</comment>
<comment type="pathway">
    <text evidence="1">Purine metabolism; GMP biosynthesis; GMP from XMP (L-Gln route): step 1/1.</text>
</comment>
<comment type="subunit">
    <text evidence="1">Homodimer.</text>
</comment>
<accession>A1V534</accession>